<gene>
    <name evidence="1" type="primary">lipA</name>
    <name type="ordered locus">RF_1187</name>
</gene>
<dbReference type="EC" id="2.8.1.8" evidence="1"/>
<dbReference type="EMBL" id="CP000053">
    <property type="protein sequence ID" value="AAY62038.1"/>
    <property type="status" value="ALT_INIT"/>
    <property type="molecule type" value="Genomic_DNA"/>
</dbReference>
<dbReference type="SMR" id="Q4UK97"/>
<dbReference type="STRING" id="315456.RF_1187"/>
<dbReference type="KEGG" id="rfe:RF_1187"/>
<dbReference type="eggNOG" id="COG0320">
    <property type="taxonomic scope" value="Bacteria"/>
</dbReference>
<dbReference type="HOGENOM" id="CLU_033144_2_1_5"/>
<dbReference type="OrthoDB" id="9787898at2"/>
<dbReference type="UniPathway" id="UPA00538">
    <property type="reaction ID" value="UER00593"/>
</dbReference>
<dbReference type="Proteomes" id="UP000008548">
    <property type="component" value="Chromosome"/>
</dbReference>
<dbReference type="GO" id="GO:0005737">
    <property type="term" value="C:cytoplasm"/>
    <property type="evidence" value="ECO:0007669"/>
    <property type="project" value="UniProtKB-SubCell"/>
</dbReference>
<dbReference type="GO" id="GO:0051539">
    <property type="term" value="F:4 iron, 4 sulfur cluster binding"/>
    <property type="evidence" value="ECO:0007669"/>
    <property type="project" value="UniProtKB-UniRule"/>
</dbReference>
<dbReference type="GO" id="GO:0016992">
    <property type="term" value="F:lipoate synthase activity"/>
    <property type="evidence" value="ECO:0007669"/>
    <property type="project" value="UniProtKB-UniRule"/>
</dbReference>
<dbReference type="GO" id="GO:0046872">
    <property type="term" value="F:metal ion binding"/>
    <property type="evidence" value="ECO:0007669"/>
    <property type="project" value="UniProtKB-KW"/>
</dbReference>
<dbReference type="CDD" id="cd01335">
    <property type="entry name" value="Radical_SAM"/>
    <property type="match status" value="1"/>
</dbReference>
<dbReference type="FunFam" id="3.20.20.70:FF:000040">
    <property type="entry name" value="Lipoyl synthase"/>
    <property type="match status" value="1"/>
</dbReference>
<dbReference type="Gene3D" id="3.20.20.70">
    <property type="entry name" value="Aldolase class I"/>
    <property type="match status" value="1"/>
</dbReference>
<dbReference type="HAMAP" id="MF_00206">
    <property type="entry name" value="Lipoyl_synth"/>
    <property type="match status" value="1"/>
</dbReference>
<dbReference type="InterPro" id="IPR013785">
    <property type="entry name" value="Aldolase_TIM"/>
</dbReference>
<dbReference type="InterPro" id="IPR006638">
    <property type="entry name" value="Elp3/MiaA/NifB-like_rSAM"/>
</dbReference>
<dbReference type="InterPro" id="IPR031691">
    <property type="entry name" value="LIAS_N"/>
</dbReference>
<dbReference type="InterPro" id="IPR003698">
    <property type="entry name" value="Lipoyl_synth"/>
</dbReference>
<dbReference type="InterPro" id="IPR007197">
    <property type="entry name" value="rSAM"/>
</dbReference>
<dbReference type="NCBIfam" id="TIGR00510">
    <property type="entry name" value="lipA"/>
    <property type="match status" value="1"/>
</dbReference>
<dbReference type="NCBIfam" id="NF004019">
    <property type="entry name" value="PRK05481.1"/>
    <property type="match status" value="1"/>
</dbReference>
<dbReference type="NCBIfam" id="NF009544">
    <property type="entry name" value="PRK12928.1"/>
    <property type="match status" value="1"/>
</dbReference>
<dbReference type="PANTHER" id="PTHR10949">
    <property type="entry name" value="LIPOYL SYNTHASE"/>
    <property type="match status" value="1"/>
</dbReference>
<dbReference type="PANTHER" id="PTHR10949:SF0">
    <property type="entry name" value="LIPOYL SYNTHASE, MITOCHONDRIAL"/>
    <property type="match status" value="1"/>
</dbReference>
<dbReference type="Pfam" id="PF16881">
    <property type="entry name" value="LIAS_N"/>
    <property type="match status" value="1"/>
</dbReference>
<dbReference type="Pfam" id="PF04055">
    <property type="entry name" value="Radical_SAM"/>
    <property type="match status" value="1"/>
</dbReference>
<dbReference type="PIRSF" id="PIRSF005963">
    <property type="entry name" value="Lipoyl_synth"/>
    <property type="match status" value="1"/>
</dbReference>
<dbReference type="SFLD" id="SFLDF00271">
    <property type="entry name" value="lipoyl_synthase"/>
    <property type="match status" value="1"/>
</dbReference>
<dbReference type="SFLD" id="SFLDS00029">
    <property type="entry name" value="Radical_SAM"/>
    <property type="match status" value="1"/>
</dbReference>
<dbReference type="SMART" id="SM00729">
    <property type="entry name" value="Elp3"/>
    <property type="match status" value="1"/>
</dbReference>
<dbReference type="SUPFAM" id="SSF102114">
    <property type="entry name" value="Radical SAM enzymes"/>
    <property type="match status" value="1"/>
</dbReference>
<dbReference type="PROSITE" id="PS51918">
    <property type="entry name" value="RADICAL_SAM"/>
    <property type="match status" value="1"/>
</dbReference>
<sequence>MSNLNKRPDWIKVKAPNSAEYYNTKDLIKNLRLNTVCEEAACPNIGECWSKKHATVMILGSVCTRACRFCNVKTGRPDLLDPHEPQRLAEAVQKLNLKHVVITSVDRDDLDDGGATHFAECISEIRKSSPNTTIEILTPDFLRKEGAAEIIANAKPDVFNHNVETVPSLYKTIRPGARYYNSLSLLHNIKKLSPEIFTKSGMMVGLGEEISEVIQVMDDLREAKVDFLTIGQYLQPTKNHAEVAKYVTPEEFKYLERIARTKGFLMVSATPLTRSSYHADEDFQKLKENYQQRHCEEAWPA</sequence>
<keyword id="KW-0004">4Fe-4S</keyword>
<keyword id="KW-0963">Cytoplasm</keyword>
<keyword id="KW-0408">Iron</keyword>
<keyword id="KW-0411">Iron-sulfur</keyword>
<keyword id="KW-0479">Metal-binding</keyword>
<keyword id="KW-0949">S-adenosyl-L-methionine</keyword>
<keyword id="KW-0808">Transferase</keyword>
<feature type="chain" id="PRO_0000278008" description="Lipoyl synthase">
    <location>
        <begin position="1"/>
        <end position="301"/>
    </location>
</feature>
<feature type="domain" description="Radical SAM core" evidence="2">
    <location>
        <begin position="49"/>
        <end position="265"/>
    </location>
</feature>
<feature type="binding site" evidence="1">
    <location>
        <position position="37"/>
    </location>
    <ligand>
        <name>[4Fe-4S] cluster</name>
        <dbReference type="ChEBI" id="CHEBI:49883"/>
        <label>1</label>
    </ligand>
</feature>
<feature type="binding site" evidence="1">
    <location>
        <position position="42"/>
    </location>
    <ligand>
        <name>[4Fe-4S] cluster</name>
        <dbReference type="ChEBI" id="CHEBI:49883"/>
        <label>1</label>
    </ligand>
</feature>
<feature type="binding site" evidence="1">
    <location>
        <position position="48"/>
    </location>
    <ligand>
        <name>[4Fe-4S] cluster</name>
        <dbReference type="ChEBI" id="CHEBI:49883"/>
        <label>1</label>
    </ligand>
</feature>
<feature type="binding site" evidence="1">
    <location>
        <position position="63"/>
    </location>
    <ligand>
        <name>[4Fe-4S] cluster</name>
        <dbReference type="ChEBI" id="CHEBI:49883"/>
        <label>2</label>
        <note>4Fe-4S-S-AdoMet</note>
    </ligand>
</feature>
<feature type="binding site" evidence="1">
    <location>
        <position position="67"/>
    </location>
    <ligand>
        <name>[4Fe-4S] cluster</name>
        <dbReference type="ChEBI" id="CHEBI:49883"/>
        <label>2</label>
        <note>4Fe-4S-S-AdoMet</note>
    </ligand>
</feature>
<feature type="binding site" evidence="1">
    <location>
        <position position="70"/>
    </location>
    <ligand>
        <name>[4Fe-4S] cluster</name>
        <dbReference type="ChEBI" id="CHEBI:49883"/>
        <label>2</label>
        <note>4Fe-4S-S-AdoMet</note>
    </ligand>
</feature>
<feature type="binding site" evidence="1">
    <location>
        <position position="276"/>
    </location>
    <ligand>
        <name>[4Fe-4S] cluster</name>
        <dbReference type="ChEBI" id="CHEBI:49883"/>
        <label>1</label>
    </ligand>
</feature>
<comment type="function">
    <text evidence="1">Catalyzes the radical-mediated insertion of two sulfur atoms into the C-6 and C-8 positions of the octanoyl moiety bound to the lipoyl domains of lipoate-dependent enzymes, thereby converting the octanoylated domains into lipoylated derivatives.</text>
</comment>
<comment type="catalytic activity">
    <reaction evidence="1">
        <text>[[Fe-S] cluster scaffold protein carrying a second [4Fe-4S](2+) cluster] + N(6)-octanoyl-L-lysyl-[protein] + 2 oxidized [2Fe-2S]-[ferredoxin] + 2 S-adenosyl-L-methionine + 4 H(+) = [[Fe-S] cluster scaffold protein] + N(6)-[(R)-dihydrolipoyl]-L-lysyl-[protein] + 4 Fe(3+) + 2 hydrogen sulfide + 2 5'-deoxyadenosine + 2 L-methionine + 2 reduced [2Fe-2S]-[ferredoxin]</text>
        <dbReference type="Rhea" id="RHEA:16585"/>
        <dbReference type="Rhea" id="RHEA-COMP:9928"/>
        <dbReference type="Rhea" id="RHEA-COMP:10000"/>
        <dbReference type="Rhea" id="RHEA-COMP:10001"/>
        <dbReference type="Rhea" id="RHEA-COMP:10475"/>
        <dbReference type="Rhea" id="RHEA-COMP:14568"/>
        <dbReference type="Rhea" id="RHEA-COMP:14569"/>
        <dbReference type="ChEBI" id="CHEBI:15378"/>
        <dbReference type="ChEBI" id="CHEBI:17319"/>
        <dbReference type="ChEBI" id="CHEBI:29034"/>
        <dbReference type="ChEBI" id="CHEBI:29919"/>
        <dbReference type="ChEBI" id="CHEBI:33722"/>
        <dbReference type="ChEBI" id="CHEBI:33737"/>
        <dbReference type="ChEBI" id="CHEBI:33738"/>
        <dbReference type="ChEBI" id="CHEBI:57844"/>
        <dbReference type="ChEBI" id="CHEBI:59789"/>
        <dbReference type="ChEBI" id="CHEBI:78809"/>
        <dbReference type="ChEBI" id="CHEBI:83100"/>
        <dbReference type="EC" id="2.8.1.8"/>
    </reaction>
</comment>
<comment type="cofactor">
    <cofactor evidence="1">
        <name>[4Fe-4S] cluster</name>
        <dbReference type="ChEBI" id="CHEBI:49883"/>
    </cofactor>
    <text evidence="1">Binds 2 [4Fe-4S] clusters per subunit. One cluster is coordinated with 3 cysteines and an exchangeable S-adenosyl-L-methionine.</text>
</comment>
<comment type="pathway">
    <text evidence="1">Protein modification; protein lipoylation via endogenous pathway; protein N(6)-(lipoyl)lysine from octanoyl-[acyl-carrier-protein]: step 2/2.</text>
</comment>
<comment type="subcellular location">
    <subcellularLocation>
        <location evidence="1">Cytoplasm</location>
    </subcellularLocation>
</comment>
<comment type="similarity">
    <text evidence="1">Belongs to the radical SAM superfamily. Lipoyl synthase family.</text>
</comment>
<comment type="sequence caution" evidence="3">
    <conflict type="erroneous initiation">
        <sequence resource="EMBL-CDS" id="AAY62038"/>
    </conflict>
</comment>
<proteinExistence type="inferred from homology"/>
<name>LIPA_RICFE</name>
<protein>
    <recommendedName>
        <fullName evidence="1">Lipoyl synthase</fullName>
        <ecNumber evidence="1">2.8.1.8</ecNumber>
    </recommendedName>
    <alternativeName>
        <fullName evidence="1">Lip-syn</fullName>
        <shortName evidence="1">LS</shortName>
    </alternativeName>
    <alternativeName>
        <fullName evidence="1">Lipoate synthase</fullName>
    </alternativeName>
    <alternativeName>
        <fullName evidence="1">Lipoic acid synthase</fullName>
    </alternativeName>
    <alternativeName>
        <fullName evidence="1">Sulfur insertion protein LipA</fullName>
    </alternativeName>
</protein>
<evidence type="ECO:0000255" key="1">
    <source>
        <dbReference type="HAMAP-Rule" id="MF_00206"/>
    </source>
</evidence>
<evidence type="ECO:0000255" key="2">
    <source>
        <dbReference type="PROSITE-ProRule" id="PRU01266"/>
    </source>
</evidence>
<evidence type="ECO:0000305" key="3"/>
<accession>Q4UK97</accession>
<reference key="1">
    <citation type="journal article" date="2005" name="PLoS Biol.">
        <title>The genome sequence of Rickettsia felis identifies the first putative conjugative plasmid in an obligate intracellular parasite.</title>
        <authorList>
            <person name="Ogata H."/>
            <person name="Renesto P."/>
            <person name="Audic S."/>
            <person name="Robert C."/>
            <person name="Blanc G."/>
            <person name="Fournier P.-E."/>
            <person name="Parinello H."/>
            <person name="Claverie J.-M."/>
            <person name="Raoult D."/>
        </authorList>
    </citation>
    <scope>NUCLEOTIDE SEQUENCE [LARGE SCALE GENOMIC DNA]</scope>
    <source>
        <strain>ATCC VR-1525 / URRWXCal2</strain>
    </source>
</reference>
<organism>
    <name type="scientific">Rickettsia felis (strain ATCC VR-1525 / URRWXCal2)</name>
    <name type="common">Rickettsia azadi</name>
    <dbReference type="NCBI Taxonomy" id="315456"/>
    <lineage>
        <taxon>Bacteria</taxon>
        <taxon>Pseudomonadati</taxon>
        <taxon>Pseudomonadota</taxon>
        <taxon>Alphaproteobacteria</taxon>
        <taxon>Rickettsiales</taxon>
        <taxon>Rickettsiaceae</taxon>
        <taxon>Rickettsieae</taxon>
        <taxon>Rickettsia</taxon>
        <taxon>spotted fever group</taxon>
    </lineage>
</organism>